<comment type="function">
    <text evidence="1">Catalyzes the 2'-O-methylation at nucleotide C2498 in 23S rRNA.</text>
</comment>
<comment type="catalytic activity">
    <reaction evidence="1">
        <text>cytidine(2498) in 23S rRNA + S-adenosyl-L-methionine = 2'-O-methylcytidine(2498) in 23S rRNA + S-adenosyl-L-homocysteine + H(+)</text>
        <dbReference type="Rhea" id="RHEA:42788"/>
        <dbReference type="Rhea" id="RHEA-COMP:10244"/>
        <dbReference type="Rhea" id="RHEA-COMP:10245"/>
        <dbReference type="ChEBI" id="CHEBI:15378"/>
        <dbReference type="ChEBI" id="CHEBI:57856"/>
        <dbReference type="ChEBI" id="CHEBI:59789"/>
        <dbReference type="ChEBI" id="CHEBI:74495"/>
        <dbReference type="ChEBI" id="CHEBI:82748"/>
        <dbReference type="EC" id="2.1.1.186"/>
    </reaction>
</comment>
<comment type="subunit">
    <text evidence="1">Monomer.</text>
</comment>
<comment type="subcellular location">
    <subcellularLocation>
        <location evidence="1">Cytoplasm</location>
    </subcellularLocation>
</comment>
<comment type="similarity">
    <text evidence="1">Belongs to the class I-like SAM-binding methyltransferase superfamily. RNA methyltransferase RlmE family. RlmM subfamily.</text>
</comment>
<gene>
    <name evidence="1" type="primary">rlmM</name>
    <name type="ordered locus">Sbal195_1392</name>
</gene>
<accession>A9KTM5</accession>
<name>RLMM_SHEB9</name>
<proteinExistence type="inferred from homology"/>
<feature type="chain" id="PRO_1000087739" description="Ribosomal RNA large subunit methyltransferase M">
    <location>
        <begin position="1"/>
        <end position="361"/>
    </location>
</feature>
<feature type="active site" description="Proton acceptor" evidence="1">
    <location>
        <position position="305"/>
    </location>
</feature>
<feature type="binding site" evidence="1">
    <location>
        <position position="187"/>
    </location>
    <ligand>
        <name>S-adenosyl-L-methionine</name>
        <dbReference type="ChEBI" id="CHEBI:59789"/>
    </ligand>
</feature>
<feature type="binding site" evidence="1">
    <location>
        <begin position="220"/>
        <end position="223"/>
    </location>
    <ligand>
        <name>S-adenosyl-L-methionine</name>
        <dbReference type="ChEBI" id="CHEBI:59789"/>
    </ligand>
</feature>
<feature type="binding site" evidence="1">
    <location>
        <position position="239"/>
    </location>
    <ligand>
        <name>S-adenosyl-L-methionine</name>
        <dbReference type="ChEBI" id="CHEBI:59789"/>
    </ligand>
</feature>
<feature type="binding site" evidence="1">
    <location>
        <position position="259"/>
    </location>
    <ligand>
        <name>S-adenosyl-L-methionine</name>
        <dbReference type="ChEBI" id="CHEBI:59789"/>
    </ligand>
</feature>
<feature type="binding site" evidence="1">
    <location>
        <position position="276"/>
    </location>
    <ligand>
        <name>S-adenosyl-L-methionine</name>
        <dbReference type="ChEBI" id="CHEBI:59789"/>
    </ligand>
</feature>
<reference key="1">
    <citation type="submission" date="2007-11" db="EMBL/GenBank/DDBJ databases">
        <title>Complete sequence of chromosome of Shewanella baltica OS195.</title>
        <authorList>
            <consortium name="US DOE Joint Genome Institute"/>
            <person name="Copeland A."/>
            <person name="Lucas S."/>
            <person name="Lapidus A."/>
            <person name="Barry K."/>
            <person name="Glavina del Rio T."/>
            <person name="Dalin E."/>
            <person name="Tice H."/>
            <person name="Pitluck S."/>
            <person name="Chain P."/>
            <person name="Malfatti S."/>
            <person name="Shin M."/>
            <person name="Vergez L."/>
            <person name="Schmutz J."/>
            <person name="Larimer F."/>
            <person name="Land M."/>
            <person name="Hauser L."/>
            <person name="Kyrpides N."/>
            <person name="Kim E."/>
            <person name="Brettar I."/>
            <person name="Rodrigues J."/>
            <person name="Konstantinidis K."/>
            <person name="Klappenbach J."/>
            <person name="Hofle M."/>
            <person name="Tiedje J."/>
            <person name="Richardson P."/>
        </authorList>
    </citation>
    <scope>NUCLEOTIDE SEQUENCE [LARGE SCALE GENOMIC DNA]</scope>
    <source>
        <strain>OS195</strain>
    </source>
</reference>
<protein>
    <recommendedName>
        <fullName evidence="1">Ribosomal RNA large subunit methyltransferase M</fullName>
        <ecNumber evidence="1">2.1.1.186</ecNumber>
    </recommendedName>
    <alternativeName>
        <fullName evidence="1">23S rRNA (cytidine2498-2'-O)-methyltransferase</fullName>
    </alternativeName>
    <alternativeName>
        <fullName evidence="1">23S rRNA 2'-O-ribose methyltransferase RlmM</fullName>
    </alternativeName>
</protein>
<dbReference type="EC" id="2.1.1.186" evidence="1"/>
<dbReference type="EMBL" id="CP000891">
    <property type="protein sequence ID" value="ABX48566.1"/>
    <property type="molecule type" value="Genomic_DNA"/>
</dbReference>
<dbReference type="RefSeq" id="WP_012088667.1">
    <property type="nucleotide sequence ID" value="NC_009997.1"/>
</dbReference>
<dbReference type="SMR" id="A9KTM5"/>
<dbReference type="GeneID" id="11771647"/>
<dbReference type="KEGG" id="sbn:Sbal195_1392"/>
<dbReference type="HOGENOM" id="CLU_043780_0_0_6"/>
<dbReference type="Proteomes" id="UP000000770">
    <property type="component" value="Chromosome"/>
</dbReference>
<dbReference type="GO" id="GO:0005737">
    <property type="term" value="C:cytoplasm"/>
    <property type="evidence" value="ECO:0007669"/>
    <property type="project" value="UniProtKB-SubCell"/>
</dbReference>
<dbReference type="GO" id="GO:0008757">
    <property type="term" value="F:S-adenosylmethionine-dependent methyltransferase activity"/>
    <property type="evidence" value="ECO:0007669"/>
    <property type="project" value="UniProtKB-UniRule"/>
</dbReference>
<dbReference type="GO" id="GO:0032259">
    <property type="term" value="P:methylation"/>
    <property type="evidence" value="ECO:0007669"/>
    <property type="project" value="UniProtKB-KW"/>
</dbReference>
<dbReference type="GO" id="GO:0006364">
    <property type="term" value="P:rRNA processing"/>
    <property type="evidence" value="ECO:0007669"/>
    <property type="project" value="UniProtKB-UniRule"/>
</dbReference>
<dbReference type="Gene3D" id="3.30.2300.20">
    <property type="match status" value="1"/>
</dbReference>
<dbReference type="Gene3D" id="3.30.70.2810">
    <property type="match status" value="1"/>
</dbReference>
<dbReference type="Gene3D" id="3.40.50.150">
    <property type="entry name" value="Vaccinia Virus protein VP39"/>
    <property type="match status" value="1"/>
</dbReference>
<dbReference type="HAMAP" id="MF_01551">
    <property type="entry name" value="23SrRNA_methyltr_M"/>
    <property type="match status" value="1"/>
</dbReference>
<dbReference type="InterPro" id="IPR040739">
    <property type="entry name" value="RlmM_FDX"/>
</dbReference>
<dbReference type="InterPro" id="IPR048646">
    <property type="entry name" value="RlmM_THUMP-like"/>
</dbReference>
<dbReference type="InterPro" id="IPR002877">
    <property type="entry name" value="RNA_MeTrfase_FtsJ_dom"/>
</dbReference>
<dbReference type="InterPro" id="IPR011224">
    <property type="entry name" value="rRNA_MeTrfase_M"/>
</dbReference>
<dbReference type="InterPro" id="IPR029063">
    <property type="entry name" value="SAM-dependent_MTases_sf"/>
</dbReference>
<dbReference type="NCBIfam" id="NF008734">
    <property type="entry name" value="PRK11760.1"/>
    <property type="match status" value="1"/>
</dbReference>
<dbReference type="PANTHER" id="PTHR37524">
    <property type="entry name" value="RIBOSOMAL RNA LARGE SUBUNIT METHYLTRANSFERASE M"/>
    <property type="match status" value="1"/>
</dbReference>
<dbReference type="PANTHER" id="PTHR37524:SF2">
    <property type="entry name" value="RIBOSOMAL RNA METHYLTRANSFERASE FTSJ DOMAIN-CONTAINING PROTEIN"/>
    <property type="match status" value="1"/>
</dbReference>
<dbReference type="Pfam" id="PF01728">
    <property type="entry name" value="FtsJ"/>
    <property type="match status" value="1"/>
</dbReference>
<dbReference type="Pfam" id="PF18125">
    <property type="entry name" value="RlmM_FDX"/>
    <property type="match status" value="1"/>
</dbReference>
<dbReference type="Pfam" id="PF21239">
    <property type="entry name" value="RLMM_N"/>
    <property type="match status" value="1"/>
</dbReference>
<dbReference type="PIRSF" id="PIRSF028774">
    <property type="entry name" value="UCP028774"/>
    <property type="match status" value="1"/>
</dbReference>
<dbReference type="SUPFAM" id="SSF53335">
    <property type="entry name" value="S-adenosyl-L-methionine-dependent methyltransferases"/>
    <property type="match status" value="1"/>
</dbReference>
<evidence type="ECO:0000255" key="1">
    <source>
        <dbReference type="HAMAP-Rule" id="MF_01551"/>
    </source>
</evidence>
<organism>
    <name type="scientific">Shewanella baltica (strain OS195)</name>
    <dbReference type="NCBI Taxonomy" id="399599"/>
    <lineage>
        <taxon>Bacteria</taxon>
        <taxon>Pseudomonadati</taxon>
        <taxon>Pseudomonadota</taxon>
        <taxon>Gammaproteobacteria</taxon>
        <taxon>Alteromonadales</taxon>
        <taxon>Shewanellaceae</taxon>
        <taxon>Shewanella</taxon>
    </lineage>
</organism>
<keyword id="KW-0963">Cytoplasm</keyword>
<keyword id="KW-0489">Methyltransferase</keyword>
<keyword id="KW-0698">rRNA processing</keyword>
<keyword id="KW-0949">S-adenosyl-L-methionine</keyword>
<keyword id="KW-0808">Transferase</keyword>
<sequence>MKNLFLFCRAGFEKECAAEIQQRAGELNVGGFVKANNNDAYVVYQCFEDDAADTLVKQLPLDSLIFARQMFAASDLLVDLPENDRISPIVAALSDVSKAGEVRVETPDTNEAKELSAFCRKFTVPLRQHLKKSGSLLAQENPKRPIIHVCFIGPGRAYVGYSYSNNSSPHFMGIPRLKMAADAPSRSSLKLDEAFGQFVPKEEQEERIRSGMNSVDLGACPGGWTYQLVRRGMFVSAVDNGPMDEKLMETGQVKHYREDGFRFEPQRKNIYWLVCDMVEKPARVAELIEAWAINGWFKEAIFNLKLPMKSRYKEVTAILETMQTILKENGVSDFKVQCKHLYHDRDEVTVHLWLRPNTAWN</sequence>